<keyword id="KW-0002">3D-structure</keyword>
<keyword id="KW-0167">Capsid protein</keyword>
<keyword id="KW-1015">Disulfide bond</keyword>
<keyword id="KW-1043">Host membrane</keyword>
<keyword id="KW-0945">Host-virus interaction</keyword>
<keyword id="KW-0472">Membrane</keyword>
<keyword id="KW-0732">Signal</keyword>
<keyword id="KW-0812">Transmembrane</keyword>
<keyword id="KW-1133">Transmembrane helix</keyword>
<keyword id="KW-1233">Viral attachment to host adhesion receptor</keyword>
<keyword id="KW-1161">Viral attachment to host cell</keyword>
<keyword id="KW-1175">Viral attachment to host cell pilus</keyword>
<keyword id="KW-1234">Viral attachment to host entry receptor</keyword>
<keyword id="KW-1249">Viral extrusion</keyword>
<keyword id="KW-1162">Viral penetration into host cytoplasm</keyword>
<keyword id="KW-1241">Viral penetration into host cytoplasm via pilus retraction</keyword>
<keyword id="KW-1188">Viral release from host cell</keyword>
<keyword id="KW-0946">Virion</keyword>
<keyword id="KW-1160">Virus entry into host cell</keyword>
<protein>
    <recommendedName>
        <fullName>Attachment protein G3P</fullName>
    </recommendedName>
    <alternativeName>
        <fullName>Gene 3 protein</fullName>
        <shortName>G3P</shortName>
    </alternativeName>
    <alternativeName>
        <fullName>Minor coat protein</fullName>
    </alternativeName>
</protein>
<organism>
    <name type="scientific">Enterobacteria phage f1</name>
    <name type="common">Bacteriophage f1</name>
    <dbReference type="NCBI Taxonomy" id="10863"/>
    <lineage>
        <taxon>Viruses</taxon>
        <taxon>Monodnaviria</taxon>
        <taxon>Loebvirae</taxon>
        <taxon>Hofneiviricota</taxon>
        <taxon>Faserviricetes</taxon>
        <taxon>Tubulavirales</taxon>
        <taxon>Inoviridae</taxon>
        <taxon>Inovirus</taxon>
        <taxon>Enterobacteria phage M13</taxon>
    </lineage>
</organism>
<evidence type="ECO:0000250" key="1">
    <source>
        <dbReference type="UniProtKB" id="P03661"/>
    </source>
</evidence>
<evidence type="ECO:0000250" key="2">
    <source>
        <dbReference type="UniProtKB" id="P69168"/>
    </source>
</evidence>
<evidence type="ECO:0000255" key="3"/>
<evidence type="ECO:0000256" key="4">
    <source>
        <dbReference type="SAM" id="MobiDB-lite"/>
    </source>
</evidence>
<evidence type="ECO:0000305" key="5"/>
<evidence type="ECO:0007744" key="6">
    <source>
        <dbReference type="PDB" id="8B3O"/>
    </source>
</evidence>
<organismHost>
    <name type="scientific">Escherichia coli</name>
    <dbReference type="NCBI Taxonomy" id="562"/>
</organismHost>
<reference key="1">
    <citation type="journal article" date="1981" name="Gene">
        <title>Nucleotide sequence and genome organisation of filamentous bacteriophages f1 and fd.</title>
        <authorList>
            <person name="Beck E."/>
            <person name="Zink B."/>
        </authorList>
    </citation>
    <scope>NUCLEOTIDE SEQUENCE [GENOMIC DNA]</scope>
</reference>
<reference key="2">
    <citation type="journal article" date="1982" name="J. Virol.">
        <title>Nucleotide sequence of bacteriophage f1 DNA.</title>
        <authorList>
            <person name="Hill D.F."/>
            <person name="Petersen G.B."/>
        </authorList>
    </citation>
    <scope>NUCLEOTIDE SEQUENCE [GENOMIC DNA]</scope>
</reference>
<reference evidence="6" key="3">
    <citation type="journal article" date="2023" name="Nat. Commun.">
        <title>Cryo-electron microscopy of the f1 filamentous phage reveals insights into viral infection and assembly.</title>
        <authorList>
            <person name="Conners R."/>
            <person name="Leon-Quezada R.I."/>
            <person name="McLaren M."/>
            <person name="Bennett N.J."/>
            <person name="Daum B."/>
            <person name="Rakonjac J."/>
            <person name="Gold V.A.M."/>
        </authorList>
    </citation>
    <scope>STRUCTURE BY ELECTRON MICROSCOPY (2.97 ANGSTROMS) OF 19-424</scope>
</reference>
<dbReference type="EMBL" id="V00606">
    <property type="protein sequence ID" value="CAA23872.1"/>
    <property type="molecule type" value="Genomic_DNA"/>
</dbReference>
<dbReference type="EMBL" id="J02448">
    <property type="protein sequence ID" value="AAA32215.1"/>
    <property type="molecule type" value="Genomic_DNA"/>
</dbReference>
<dbReference type="RefSeq" id="YP_010775830.1">
    <property type="nucleotide sequence ID" value="NC_075025.1"/>
</dbReference>
<dbReference type="RefSeq" id="YP_010775840.1">
    <property type="nucleotide sequence ID" value="NC_075026.1"/>
</dbReference>
<dbReference type="RefSeq" id="YP_010775880.1">
    <property type="nucleotide sequence ID" value="NC_075030.1"/>
</dbReference>
<dbReference type="PDB" id="8B3O">
    <property type="method" value="EM"/>
    <property type="resolution" value="2.97 A"/>
    <property type="chains" value="FFF/GGG/HHH/III/JJJ=19-424"/>
</dbReference>
<dbReference type="PDBsum" id="8B3O"/>
<dbReference type="EMDB" id="EMD-15831"/>
<dbReference type="SMR" id="P69169"/>
<dbReference type="TCDB" id="1.B.53.1.1">
    <property type="family name" value="the filamentous phage g3p channel-forming protein (fp-g3p) family"/>
</dbReference>
<dbReference type="GeneID" id="80512434"/>
<dbReference type="GeneID" id="80512445"/>
<dbReference type="GeneID" id="80512486"/>
<dbReference type="Proteomes" id="UP000002557">
    <property type="component" value="Genome"/>
</dbReference>
<dbReference type="Proteomes" id="UP000241027">
    <property type="component" value="Genome"/>
</dbReference>
<dbReference type="GO" id="GO:0033644">
    <property type="term" value="C:host cell membrane"/>
    <property type="evidence" value="ECO:0007669"/>
    <property type="project" value="UniProtKB-SubCell"/>
</dbReference>
<dbReference type="GO" id="GO:0016020">
    <property type="term" value="C:membrane"/>
    <property type="evidence" value="ECO:0007669"/>
    <property type="project" value="UniProtKB-KW"/>
</dbReference>
<dbReference type="GO" id="GO:0019028">
    <property type="term" value="C:viral capsid"/>
    <property type="evidence" value="ECO:0007669"/>
    <property type="project" value="UniProtKB-KW"/>
</dbReference>
<dbReference type="GO" id="GO:0098671">
    <property type="term" value="P:adhesion receptor-mediated virion attachment to host cell"/>
    <property type="evidence" value="ECO:0007669"/>
    <property type="project" value="UniProtKB-KW"/>
</dbReference>
<dbReference type="GO" id="GO:0098670">
    <property type="term" value="P:entry receptor-mediated virion attachment to host cell"/>
    <property type="evidence" value="ECO:0007669"/>
    <property type="project" value="UniProtKB-KW"/>
</dbReference>
<dbReference type="GO" id="GO:0099045">
    <property type="term" value="P:viral extrusion"/>
    <property type="evidence" value="ECO:0007669"/>
    <property type="project" value="UniProtKB-KW"/>
</dbReference>
<dbReference type="GO" id="GO:0039666">
    <property type="term" value="P:virion attachment to host cell pilus"/>
    <property type="evidence" value="ECO:0007669"/>
    <property type="project" value="UniProtKB-KW"/>
</dbReference>
<dbReference type="FunFam" id="3.90.450.1:FF:000001">
    <property type="entry name" value="Attachment protein G3P"/>
    <property type="match status" value="1"/>
</dbReference>
<dbReference type="Gene3D" id="3.90.450.1">
    <property type="entry name" value="Minor Coat Protein, Domain 2"/>
    <property type="match status" value="1"/>
</dbReference>
<dbReference type="Gene3D" id="2.30.27.10">
    <property type="entry name" value="Phage FD Coat Protein,Membrane penetration domain"/>
    <property type="match status" value="1"/>
</dbReference>
<dbReference type="InterPro" id="IPR008021">
    <property type="entry name" value="Attachment_G3P_N"/>
</dbReference>
<dbReference type="InterPro" id="IPR036200">
    <property type="entry name" value="Attachment_G3P_N_sf"/>
</dbReference>
<dbReference type="InterPro" id="IPR013834">
    <property type="entry name" value="Phage_G3P_N2_sf"/>
</dbReference>
<dbReference type="Pfam" id="PF05357">
    <property type="entry name" value="Phage_Coat_A"/>
    <property type="match status" value="2"/>
</dbReference>
<dbReference type="SUPFAM" id="SSF50176">
    <property type="entry name" value="N-terminal domains of the minor coat protein g3p"/>
    <property type="match status" value="2"/>
</dbReference>
<feature type="signal peptide" evidence="1">
    <location>
        <begin position="1"/>
        <end position="18"/>
    </location>
</feature>
<feature type="chain" id="PRO_0000003294" description="Attachment protein G3P">
    <location>
        <begin position="19"/>
        <end position="424"/>
    </location>
</feature>
<feature type="transmembrane region" description="Helical" evidence="3">
    <location>
        <begin position="398"/>
        <end position="418"/>
    </location>
</feature>
<feature type="region of interest" description="N1">
    <location>
        <begin position="19"/>
        <end position="85"/>
    </location>
</feature>
<feature type="region of interest" description="Disordered" evidence="4">
    <location>
        <begin position="83"/>
        <end position="147"/>
    </location>
</feature>
<feature type="region of interest" description="G1 (Gly-rich linker)">
    <location>
        <begin position="86"/>
        <end position="104"/>
    </location>
</feature>
<feature type="region of interest" description="Hinge" evidence="1">
    <location>
        <begin position="105"/>
        <end position="141"/>
    </location>
</feature>
<feature type="region of interest" description="N2" evidence="1">
    <location>
        <begin position="142"/>
        <end position="228"/>
    </location>
</feature>
<feature type="region of interest" description="Disordered" evidence="4">
    <location>
        <begin position="222"/>
        <end position="279"/>
    </location>
</feature>
<feature type="region of interest" description="G2 (Gly-rich linker)">
    <location>
        <begin position="236"/>
        <end position="274"/>
    </location>
</feature>
<feature type="region of interest" description="Not essential for gene 3 function">
    <location>
        <begin position="253"/>
        <end position="262"/>
    </location>
</feature>
<feature type="region of interest" description="CT">
    <location>
        <begin position="275"/>
        <end position="424"/>
    </location>
</feature>
<feature type="compositionally biased region" description="Gly residues" evidence="4">
    <location>
        <begin position="86"/>
        <end position="105"/>
    </location>
</feature>
<feature type="compositionally biased region" description="Polar residues" evidence="4">
    <location>
        <begin position="132"/>
        <end position="147"/>
    </location>
</feature>
<feature type="compositionally biased region" description="Gly residues" evidence="4">
    <location>
        <begin position="235"/>
        <end position="273"/>
    </location>
</feature>
<feature type="disulfide bond" evidence="1">
    <location>
        <begin position="25"/>
        <end position="54"/>
    </location>
</feature>
<feature type="disulfide bond" evidence="1">
    <location>
        <begin position="64"/>
        <end position="71"/>
    </location>
</feature>
<feature type="disulfide bond" evidence="1">
    <location>
        <begin position="206"/>
        <end position="219"/>
    </location>
</feature>
<feature type="sequence conflict" description="In Ref. 1; CAA23872." evidence="5" ref="1">
    <original>K</original>
    <variation>N</variation>
    <location>
        <position position="280"/>
    </location>
</feature>
<feature type="sequence conflict" description="In Ref. 1; CAA23872." evidence="5" ref="1">
    <original>G</original>
    <variation>R</variation>
    <location>
        <position position="378"/>
    </location>
</feature>
<gene>
    <name type="primary">III</name>
</gene>
<accession>P69169</accession>
<accession>P03662</accession>
<name>G3P_BPF1</name>
<comment type="function">
    <text evidence="1">Plays essential roles both in the penetration of the viral genome into the bacterial host via pilus retraction and in the extrusion process. During the initial step of infection, G3P mediates adsorption of the phage to its primary receptor, the tip of host F-pilus. Attachment of the phage causes pilus retraction bringing the viral particle into close proximity of the host cell inner membrane. Binding to the host pilus initiates a change in the G3P conformation, allowing subsequent interaction with the host entry receptors tolA, TolQ and TolR and penetration of the viral DNA into the host cytoplasm. In the extrusion process, G3P mediates the release of the membrane-anchored virion from the cell via its C-terminal domain.</text>
</comment>
<comment type="subunit">
    <text evidence="1 2">Interacts with G6P; this interaction is required for proper integration of G3P and G6P into the virion (By similarity). Interacts with G8P. Interacts with the tip of the host pilus. Interacts (via N-terminus) with host TolA. Interacts (via transmembrane domain) with host TolQ (via 2nd and 3rd transmembrane domains); this interaction allows the phage translocation across the host inner membrane. Interacts (via transmembrane domain) with host TolR (via transmembrane domain); this interaction allows the phage translocation across the host inner membrane (By similarity).</text>
</comment>
<comment type="subcellular location">
    <subcellularLocation>
        <location evidence="5">Virion</location>
    </subcellularLocation>
    <subcellularLocation>
        <location evidence="5">Host membrane</location>
        <topology evidence="5">Single-pass type I membrane protein</topology>
    </subcellularLocation>
    <text>Prior to assembly, G3P is found associated with the bacterial host inner membrane. There are about five copies of this protein per mature phage that are located on the head side of the filamentous virion.</text>
</comment>
<comment type="domain">
    <text evidence="1">Consists of 3 domains (N1/D1, N2/D2, and CT) separated by glycine-rich repeats and a C-terminal transmembrane segment. The N2 domain interacts with the F pilus, whereas the N1 domain forms a complex with the C-terminal domain of TolA at later stages of the infection process. The C-terminal domain is required for release of viral particles from the host bacterial membrane and proper integration of G3P and G6P proteins in the virion.</text>
</comment>
<comment type="similarity">
    <text evidence="5">Belongs to the inovirus G3P protein family.</text>
</comment>
<proteinExistence type="evidence at protein level"/>
<sequence length="424" mass="44622">MKKLLFAIPLVVPFYSHSAETVESCLAKPHTENSFTNVWKDDKTLDRYANYEGCLWNATGVVVCTGDETQCYGTWVPIGLAIPENEGGGSEGGGSEGGGSEGGGTKPPEYGDTPIPGYTYINPLDGTYPPGTEQNPANPNPSLEESQPLNTFMFQNNRFRNRQGALTVYTGTVTQGTDPVKTYYQYTPVSSKAMYDAYWNGKFRDCAFHSGFNEDPFVCEYQGQSSDLPQPPVNAGGGSGGGSGGGSEGGGSEGGGSEGGGSEGGGSGGGSGSGDFDYEKMANANKGAMTENADENALQSDAKGKLDSVATDYGAAIDGFIGDVSGLANGNGATGDFAGSNSQMAQVGDGDNSPLMNNFRQYLPSLPQSVECRPFVFGAGKPYEFSIDCDKINLFRGVFAFLLYVATFMYVFSTFANILRNKES</sequence>